<reference key="1">
    <citation type="journal article" date="2000" name="Science">
        <title>Complete genome sequence of Neisseria meningitidis serogroup B strain MC58.</title>
        <authorList>
            <person name="Tettelin H."/>
            <person name="Saunders N.J."/>
            <person name="Heidelberg J.F."/>
            <person name="Jeffries A.C."/>
            <person name="Nelson K.E."/>
            <person name="Eisen J.A."/>
            <person name="Ketchum K.A."/>
            <person name="Hood D.W."/>
            <person name="Peden J.F."/>
            <person name="Dodson R.J."/>
            <person name="Nelson W.C."/>
            <person name="Gwinn M.L."/>
            <person name="DeBoy R.T."/>
            <person name="Peterson J.D."/>
            <person name="Hickey E.K."/>
            <person name="Haft D.H."/>
            <person name="Salzberg S.L."/>
            <person name="White O."/>
            <person name="Fleischmann R.D."/>
            <person name="Dougherty B.A."/>
            <person name="Mason T.M."/>
            <person name="Ciecko A."/>
            <person name="Parksey D.S."/>
            <person name="Blair E."/>
            <person name="Cittone H."/>
            <person name="Clark E.B."/>
            <person name="Cotton M.D."/>
            <person name="Utterback T.R."/>
            <person name="Khouri H.M."/>
            <person name="Qin H."/>
            <person name="Vamathevan J.J."/>
            <person name="Gill J."/>
            <person name="Scarlato V."/>
            <person name="Masignani V."/>
            <person name="Pizza M."/>
            <person name="Grandi G."/>
            <person name="Sun L."/>
            <person name="Smith H.O."/>
            <person name="Fraser C.M."/>
            <person name="Moxon E.R."/>
            <person name="Rappuoli R."/>
            <person name="Venter J.C."/>
        </authorList>
    </citation>
    <scope>NUCLEOTIDE SEQUENCE [LARGE SCALE GENOMIC DNA]</scope>
    <source>
        <strain>ATCC BAA-335 / MC58</strain>
    </source>
</reference>
<sequence>MTVPHIPRGPVMADIAAFRLTEEEKQRLLDPAVGGIILFRRNFQNIEQLKTLTAEIKALRTPELIIAVDHEGGRVQRFIEGFTRLPAMSTLGEIWDKDGASAAETAAGQVGRVLATELSACGIDLSFTPVLDLDWGNCPVIGNRSFHRNPEAVARLALALQKGLTKGGMKSCGKHFPGHGFVEGDSHLVLPEDWRSLSELETADLAPFRIMSREGMAAVMPAHVVYPQVDTKPAGFSEIWLKQILRRDIGFKGVIFSDDLTMEGACGAGGIKERARISFEAGCDIVLVCNRPDLVDELREDFRIPDNPTLAQRWQYMANTLGSAAAQAVMQTADFQAAQAFVAGLASPQDTAGGVKVGEAF</sequence>
<proteinExistence type="inferred from homology"/>
<feature type="chain" id="PRO_0000210791" description="Beta-hexosaminidase">
    <location>
        <begin position="1"/>
        <end position="361"/>
    </location>
</feature>
<feature type="active site" description="Proton donor/acceptor" evidence="1">
    <location>
        <position position="187"/>
    </location>
</feature>
<feature type="active site" description="Nucleophile" evidence="1">
    <location>
        <position position="258"/>
    </location>
</feature>
<feature type="binding site" evidence="1">
    <location>
        <position position="69"/>
    </location>
    <ligand>
        <name>substrate</name>
    </ligand>
</feature>
<feature type="binding site" evidence="1">
    <location>
        <position position="77"/>
    </location>
    <ligand>
        <name>substrate</name>
    </ligand>
</feature>
<feature type="binding site" evidence="1">
    <location>
        <position position="144"/>
    </location>
    <ligand>
        <name>substrate</name>
    </ligand>
</feature>
<feature type="binding site" evidence="1">
    <location>
        <begin position="174"/>
        <end position="175"/>
    </location>
    <ligand>
        <name>substrate</name>
    </ligand>
</feature>
<feature type="site" description="Important for catalytic activity" evidence="1">
    <location>
        <position position="185"/>
    </location>
</feature>
<accession>Q9K0Q4</accession>
<protein>
    <recommendedName>
        <fullName evidence="1">Beta-hexosaminidase</fullName>
        <ecNumber evidence="1">3.2.1.52</ecNumber>
    </recommendedName>
    <alternativeName>
        <fullName evidence="1">Beta-N-acetylhexosaminidase</fullName>
    </alternativeName>
    <alternativeName>
        <fullName evidence="1">N-acetyl-beta-glucosaminidase</fullName>
    </alternativeName>
</protein>
<keyword id="KW-0131">Cell cycle</keyword>
<keyword id="KW-0132">Cell division</keyword>
<keyword id="KW-0133">Cell shape</keyword>
<keyword id="KW-0961">Cell wall biogenesis/degradation</keyword>
<keyword id="KW-0963">Cytoplasm</keyword>
<keyword id="KW-0326">Glycosidase</keyword>
<keyword id="KW-0378">Hydrolase</keyword>
<keyword id="KW-0573">Peptidoglycan synthesis</keyword>
<keyword id="KW-1185">Reference proteome</keyword>
<comment type="function">
    <text evidence="1">Plays a role in peptidoglycan recycling by cleaving the terminal beta-1,4-linked N-acetylglucosamine (GlcNAc) from peptide-linked peptidoglycan fragments, giving rise to free GlcNAc, anhydro-N-acetylmuramic acid and anhydro-N-acetylmuramic acid-linked peptides.</text>
</comment>
<comment type="catalytic activity">
    <reaction evidence="1">
        <text>Hydrolysis of terminal non-reducing N-acetyl-D-hexosamine residues in N-acetyl-beta-D-hexosaminides.</text>
        <dbReference type="EC" id="3.2.1.52"/>
    </reaction>
</comment>
<comment type="pathway">
    <text evidence="1">Cell wall biogenesis; peptidoglycan recycling.</text>
</comment>
<comment type="subcellular location">
    <subcellularLocation>
        <location evidence="1">Cytoplasm</location>
    </subcellularLocation>
</comment>
<comment type="similarity">
    <text evidence="1">Belongs to the glycosyl hydrolase 3 family. NagZ subfamily.</text>
</comment>
<dbReference type="EC" id="3.2.1.52" evidence="1"/>
<dbReference type="EMBL" id="AE002098">
    <property type="protein sequence ID" value="AAF40960.1"/>
    <property type="molecule type" value="Genomic_DNA"/>
</dbReference>
<dbReference type="PIR" id="B81190">
    <property type="entry name" value="B81190"/>
</dbReference>
<dbReference type="RefSeq" id="NP_273575.1">
    <property type="nucleotide sequence ID" value="NC_003112.2"/>
</dbReference>
<dbReference type="RefSeq" id="WP_002225592.1">
    <property type="nucleotide sequence ID" value="NC_003112.2"/>
</dbReference>
<dbReference type="SMR" id="Q9K0Q4"/>
<dbReference type="FunCoup" id="Q9K0Q4">
    <property type="interactions" value="289"/>
</dbReference>
<dbReference type="STRING" id="122586.NMB0530"/>
<dbReference type="CAZy" id="GH3">
    <property type="family name" value="Glycoside Hydrolase Family 3"/>
</dbReference>
<dbReference type="PaxDb" id="122586-NMB0530"/>
<dbReference type="KEGG" id="nme:NMB0530"/>
<dbReference type="PATRIC" id="fig|122586.8.peg.674"/>
<dbReference type="HOGENOM" id="CLU_008392_0_0_4"/>
<dbReference type="InParanoid" id="Q9K0Q4"/>
<dbReference type="OrthoDB" id="9786661at2"/>
<dbReference type="UniPathway" id="UPA00544"/>
<dbReference type="Proteomes" id="UP000000425">
    <property type="component" value="Chromosome"/>
</dbReference>
<dbReference type="GO" id="GO:0005829">
    <property type="term" value="C:cytosol"/>
    <property type="evidence" value="ECO:0000318"/>
    <property type="project" value="GO_Central"/>
</dbReference>
<dbReference type="GO" id="GO:0016231">
    <property type="term" value="F:beta-N-acetylglucosaminidase activity"/>
    <property type="evidence" value="ECO:0000318"/>
    <property type="project" value="GO_Central"/>
</dbReference>
<dbReference type="GO" id="GO:0005975">
    <property type="term" value="P:carbohydrate metabolic process"/>
    <property type="evidence" value="ECO:0007669"/>
    <property type="project" value="InterPro"/>
</dbReference>
<dbReference type="GO" id="GO:0051301">
    <property type="term" value="P:cell division"/>
    <property type="evidence" value="ECO:0007669"/>
    <property type="project" value="UniProtKB-KW"/>
</dbReference>
<dbReference type="GO" id="GO:0071555">
    <property type="term" value="P:cell wall organization"/>
    <property type="evidence" value="ECO:0007669"/>
    <property type="project" value="UniProtKB-KW"/>
</dbReference>
<dbReference type="GO" id="GO:0009252">
    <property type="term" value="P:peptidoglycan biosynthetic process"/>
    <property type="evidence" value="ECO:0007669"/>
    <property type="project" value="UniProtKB-KW"/>
</dbReference>
<dbReference type="GO" id="GO:0009254">
    <property type="term" value="P:peptidoglycan turnover"/>
    <property type="evidence" value="ECO:0000318"/>
    <property type="project" value="GO_Central"/>
</dbReference>
<dbReference type="GO" id="GO:0008360">
    <property type="term" value="P:regulation of cell shape"/>
    <property type="evidence" value="ECO:0007669"/>
    <property type="project" value="UniProtKB-KW"/>
</dbReference>
<dbReference type="FunFam" id="3.20.20.300:FF:000001">
    <property type="entry name" value="Beta-hexosaminidase"/>
    <property type="match status" value="1"/>
</dbReference>
<dbReference type="Gene3D" id="3.20.20.300">
    <property type="entry name" value="Glycoside hydrolase, family 3, N-terminal domain"/>
    <property type="match status" value="1"/>
</dbReference>
<dbReference type="HAMAP" id="MF_00364">
    <property type="entry name" value="NagZ"/>
    <property type="match status" value="1"/>
</dbReference>
<dbReference type="InterPro" id="IPR022956">
    <property type="entry name" value="Beta_hexosaminidase_bac"/>
</dbReference>
<dbReference type="InterPro" id="IPR019800">
    <property type="entry name" value="Glyco_hydro_3_AS"/>
</dbReference>
<dbReference type="InterPro" id="IPR001764">
    <property type="entry name" value="Glyco_hydro_3_N"/>
</dbReference>
<dbReference type="InterPro" id="IPR036962">
    <property type="entry name" value="Glyco_hydro_3_N_sf"/>
</dbReference>
<dbReference type="InterPro" id="IPR017853">
    <property type="entry name" value="Glycoside_hydrolase_SF"/>
</dbReference>
<dbReference type="InterPro" id="IPR050226">
    <property type="entry name" value="NagZ_Beta-hexosaminidase"/>
</dbReference>
<dbReference type="NCBIfam" id="NF003740">
    <property type="entry name" value="PRK05337.1"/>
    <property type="match status" value="1"/>
</dbReference>
<dbReference type="PANTHER" id="PTHR30480:SF13">
    <property type="entry name" value="BETA-HEXOSAMINIDASE"/>
    <property type="match status" value="1"/>
</dbReference>
<dbReference type="PANTHER" id="PTHR30480">
    <property type="entry name" value="BETA-HEXOSAMINIDASE-RELATED"/>
    <property type="match status" value="1"/>
</dbReference>
<dbReference type="Pfam" id="PF00933">
    <property type="entry name" value="Glyco_hydro_3"/>
    <property type="match status" value="1"/>
</dbReference>
<dbReference type="SUPFAM" id="SSF51445">
    <property type="entry name" value="(Trans)glycosidases"/>
    <property type="match status" value="1"/>
</dbReference>
<dbReference type="PROSITE" id="PS00775">
    <property type="entry name" value="GLYCOSYL_HYDROL_F3"/>
    <property type="match status" value="1"/>
</dbReference>
<gene>
    <name evidence="1" type="primary">nagZ</name>
    <name type="ordered locus">NMB0530</name>
</gene>
<organism>
    <name type="scientific">Neisseria meningitidis serogroup B (strain ATCC BAA-335 / MC58)</name>
    <dbReference type="NCBI Taxonomy" id="122586"/>
    <lineage>
        <taxon>Bacteria</taxon>
        <taxon>Pseudomonadati</taxon>
        <taxon>Pseudomonadota</taxon>
        <taxon>Betaproteobacteria</taxon>
        <taxon>Neisseriales</taxon>
        <taxon>Neisseriaceae</taxon>
        <taxon>Neisseria</taxon>
    </lineage>
</organism>
<evidence type="ECO:0000255" key="1">
    <source>
        <dbReference type="HAMAP-Rule" id="MF_00364"/>
    </source>
</evidence>
<name>NAGZ_NEIMB</name>